<accession>Q8ZTU5</accession>
<organism>
    <name type="scientific">Pyrobaculum aerophilum (strain ATCC 51768 / DSM 7523 / JCM 9630 / CIP 104966 / NBRC 100827 / IM2)</name>
    <dbReference type="NCBI Taxonomy" id="178306"/>
    <lineage>
        <taxon>Archaea</taxon>
        <taxon>Thermoproteota</taxon>
        <taxon>Thermoprotei</taxon>
        <taxon>Thermoproteales</taxon>
        <taxon>Thermoproteaceae</taxon>
        <taxon>Pyrobaculum</taxon>
    </lineage>
</organism>
<sequence length="375" mass="43179">MEEEFVVTPWEVRGRVDYEKLLKHFGAKPLTKDEVALLEKYAGEVHPLIRRGFFYAHRDFDFIMKWHGEGRPWALYTGRGPSGPVHIGHMVPWILLKWFSDKFGLEVYFQITDDEKFYDDPEMKLEEATNWAYENALDVIALGFSPERLHLIIDTKDIKPLYPIAVRVAKKLTWNTVKATFGFTDSTNIGLIFYPSLQIAVAFLPTELRREATPVLIPCAIDQDPYFRLARDIADALGYPKPSTLYSKFIMALTGESKMSASNPDSAIYTLDDEKTVRRKVMNAFTGGRPTAEEQRKYGGNPEVCPVFHYHMLFDPDDASVEKIRQDCKSGALLCGECKLKLHEKITKFLKEHRERREKARGKVDEYRLSVKLSK</sequence>
<proteinExistence type="inferred from homology"/>
<evidence type="ECO:0000255" key="1">
    <source>
        <dbReference type="HAMAP-Rule" id="MF_00140"/>
    </source>
</evidence>
<feature type="chain" id="PRO_0000136728" description="Tryptophan--tRNA ligase">
    <location>
        <begin position="1"/>
        <end position="375"/>
    </location>
</feature>
<feature type="short sequence motif" description="'HIGH' region">
    <location>
        <begin position="81"/>
        <end position="89"/>
    </location>
</feature>
<feature type="short sequence motif" description="'KMSKS' region">
    <location>
        <begin position="258"/>
        <end position="262"/>
    </location>
</feature>
<gene>
    <name evidence="1" type="primary">trpS</name>
    <name type="ordered locus">PAE3091</name>
</gene>
<keyword id="KW-0030">Aminoacyl-tRNA synthetase</keyword>
<keyword id="KW-0067">ATP-binding</keyword>
<keyword id="KW-0963">Cytoplasm</keyword>
<keyword id="KW-0436">Ligase</keyword>
<keyword id="KW-0547">Nucleotide-binding</keyword>
<keyword id="KW-0648">Protein biosynthesis</keyword>
<keyword id="KW-1185">Reference proteome</keyword>
<dbReference type="EC" id="6.1.1.2" evidence="1"/>
<dbReference type="EMBL" id="AE009441">
    <property type="protein sequence ID" value="AAL64664.1"/>
    <property type="molecule type" value="Genomic_DNA"/>
</dbReference>
<dbReference type="RefSeq" id="WP_011009132.1">
    <property type="nucleotide sequence ID" value="NC_003364.1"/>
</dbReference>
<dbReference type="SMR" id="Q8ZTU5"/>
<dbReference type="FunCoup" id="Q8ZTU5">
    <property type="interactions" value="273"/>
</dbReference>
<dbReference type="STRING" id="178306.PAE3091"/>
<dbReference type="EnsemblBacteria" id="AAL64664">
    <property type="protein sequence ID" value="AAL64664"/>
    <property type="gene ID" value="PAE3091"/>
</dbReference>
<dbReference type="GeneID" id="1463840"/>
<dbReference type="KEGG" id="pai:PAE3091"/>
<dbReference type="PATRIC" id="fig|178306.9.peg.2323"/>
<dbReference type="eggNOG" id="arCOG01887">
    <property type="taxonomic scope" value="Archaea"/>
</dbReference>
<dbReference type="HOGENOM" id="CLU_032621_0_1_2"/>
<dbReference type="InParanoid" id="Q8ZTU5"/>
<dbReference type="Proteomes" id="UP000002439">
    <property type="component" value="Chromosome"/>
</dbReference>
<dbReference type="GO" id="GO:0005737">
    <property type="term" value="C:cytoplasm"/>
    <property type="evidence" value="ECO:0000318"/>
    <property type="project" value="GO_Central"/>
</dbReference>
<dbReference type="GO" id="GO:0005524">
    <property type="term" value="F:ATP binding"/>
    <property type="evidence" value="ECO:0007669"/>
    <property type="project" value="UniProtKB-UniRule"/>
</dbReference>
<dbReference type="GO" id="GO:0004830">
    <property type="term" value="F:tryptophan-tRNA ligase activity"/>
    <property type="evidence" value="ECO:0000318"/>
    <property type="project" value="GO_Central"/>
</dbReference>
<dbReference type="GO" id="GO:0006436">
    <property type="term" value="P:tryptophanyl-tRNA aminoacylation"/>
    <property type="evidence" value="ECO:0000318"/>
    <property type="project" value="GO_Central"/>
</dbReference>
<dbReference type="CDD" id="cd00806">
    <property type="entry name" value="TrpRS_core"/>
    <property type="match status" value="1"/>
</dbReference>
<dbReference type="FunFam" id="1.10.240.10:FF:000007">
    <property type="entry name" value="Tryptophan--tRNA ligase"/>
    <property type="match status" value="1"/>
</dbReference>
<dbReference type="Gene3D" id="3.40.50.620">
    <property type="entry name" value="HUPs"/>
    <property type="match status" value="1"/>
</dbReference>
<dbReference type="Gene3D" id="1.10.240.10">
    <property type="entry name" value="Tyrosyl-Transfer RNA Synthetase"/>
    <property type="match status" value="1"/>
</dbReference>
<dbReference type="HAMAP" id="MF_00140_A">
    <property type="entry name" value="Trp_tRNA_synth_A"/>
    <property type="match status" value="1"/>
</dbReference>
<dbReference type="InterPro" id="IPR001412">
    <property type="entry name" value="aa-tRNA-synth_I_CS"/>
</dbReference>
<dbReference type="InterPro" id="IPR002305">
    <property type="entry name" value="aa-tRNA-synth_Ic"/>
</dbReference>
<dbReference type="InterPro" id="IPR014729">
    <property type="entry name" value="Rossmann-like_a/b/a_fold"/>
</dbReference>
<dbReference type="InterPro" id="IPR002306">
    <property type="entry name" value="Trp-tRNA-ligase"/>
</dbReference>
<dbReference type="InterPro" id="IPR020653">
    <property type="entry name" value="Tryptophan-tRNA-ligase_arc"/>
</dbReference>
<dbReference type="NCBIfam" id="NF008927">
    <property type="entry name" value="PRK12285.1-4"/>
    <property type="match status" value="1"/>
</dbReference>
<dbReference type="NCBIfam" id="TIGR00233">
    <property type="entry name" value="trpS"/>
    <property type="match status" value="1"/>
</dbReference>
<dbReference type="PANTHER" id="PTHR10055:SF1">
    <property type="entry name" value="TRYPTOPHAN--TRNA LIGASE, CYTOPLASMIC"/>
    <property type="match status" value="1"/>
</dbReference>
<dbReference type="PANTHER" id="PTHR10055">
    <property type="entry name" value="TRYPTOPHANYL-TRNA SYNTHETASE"/>
    <property type="match status" value="1"/>
</dbReference>
<dbReference type="Pfam" id="PF00579">
    <property type="entry name" value="tRNA-synt_1b"/>
    <property type="match status" value="1"/>
</dbReference>
<dbReference type="PRINTS" id="PR01039">
    <property type="entry name" value="TRNASYNTHTRP"/>
</dbReference>
<dbReference type="SUPFAM" id="SSF52374">
    <property type="entry name" value="Nucleotidylyl transferase"/>
    <property type="match status" value="1"/>
</dbReference>
<dbReference type="PROSITE" id="PS00178">
    <property type="entry name" value="AA_TRNA_LIGASE_I"/>
    <property type="match status" value="1"/>
</dbReference>
<comment type="catalytic activity">
    <reaction evidence="1">
        <text>tRNA(Trp) + L-tryptophan + ATP = L-tryptophyl-tRNA(Trp) + AMP + diphosphate + H(+)</text>
        <dbReference type="Rhea" id="RHEA:24080"/>
        <dbReference type="Rhea" id="RHEA-COMP:9671"/>
        <dbReference type="Rhea" id="RHEA-COMP:9705"/>
        <dbReference type="ChEBI" id="CHEBI:15378"/>
        <dbReference type="ChEBI" id="CHEBI:30616"/>
        <dbReference type="ChEBI" id="CHEBI:33019"/>
        <dbReference type="ChEBI" id="CHEBI:57912"/>
        <dbReference type="ChEBI" id="CHEBI:78442"/>
        <dbReference type="ChEBI" id="CHEBI:78535"/>
        <dbReference type="ChEBI" id="CHEBI:456215"/>
        <dbReference type="EC" id="6.1.1.2"/>
    </reaction>
</comment>
<comment type="subcellular location">
    <subcellularLocation>
        <location evidence="1">Cytoplasm</location>
    </subcellularLocation>
</comment>
<comment type="similarity">
    <text evidence="1">Belongs to the class-I aminoacyl-tRNA synthetase family.</text>
</comment>
<protein>
    <recommendedName>
        <fullName evidence="1">Tryptophan--tRNA ligase</fullName>
        <ecNumber evidence="1">6.1.1.2</ecNumber>
    </recommendedName>
    <alternativeName>
        <fullName evidence="1">Tryptophanyl-tRNA synthetase</fullName>
        <shortName evidence="1">TrpRS</shortName>
    </alternativeName>
</protein>
<reference key="1">
    <citation type="journal article" date="2002" name="Proc. Natl. Acad. Sci. U.S.A.">
        <title>Genome sequence of the hyperthermophilic crenarchaeon Pyrobaculum aerophilum.</title>
        <authorList>
            <person name="Fitz-Gibbon S.T."/>
            <person name="Ladner H."/>
            <person name="Kim U.-J."/>
            <person name="Stetter K.O."/>
            <person name="Simon M.I."/>
            <person name="Miller J.H."/>
        </authorList>
    </citation>
    <scope>NUCLEOTIDE SEQUENCE [LARGE SCALE GENOMIC DNA]</scope>
    <source>
        <strain>ATCC 51768 / DSM 7523 / JCM 9630 / CIP 104966 / NBRC 100827 / IM2</strain>
    </source>
</reference>
<name>SYW_PYRAE</name>